<feature type="chain" id="PRO_0000104516" description="Serpentine receptor class delta-28">
    <location>
        <begin position="1"/>
        <end position="320"/>
    </location>
</feature>
<feature type="transmembrane region" description="Helical" evidence="1">
    <location>
        <begin position="5"/>
        <end position="25"/>
    </location>
</feature>
<feature type="transmembrane region" description="Helical" evidence="1">
    <location>
        <begin position="38"/>
        <end position="58"/>
    </location>
</feature>
<feature type="transmembrane region" description="Helical" evidence="1">
    <location>
        <begin position="83"/>
        <end position="103"/>
    </location>
</feature>
<feature type="transmembrane region" description="Helical" evidence="1">
    <location>
        <begin position="122"/>
        <end position="142"/>
    </location>
</feature>
<feature type="transmembrane region" description="Helical" evidence="1">
    <location>
        <begin position="176"/>
        <end position="196"/>
    </location>
</feature>
<feature type="transmembrane region" description="Helical" evidence="1">
    <location>
        <begin position="230"/>
        <end position="250"/>
    </location>
</feature>
<feature type="transmembrane region" description="Helical" evidence="1">
    <location>
        <begin position="258"/>
        <end position="278"/>
    </location>
</feature>
<protein>
    <recommendedName>
        <fullName>Serpentine receptor class delta-28</fullName>
        <shortName>Protein srd-28</shortName>
    </recommendedName>
</protein>
<organism>
    <name type="scientific">Caenorhabditis elegans</name>
    <dbReference type="NCBI Taxonomy" id="6239"/>
    <lineage>
        <taxon>Eukaryota</taxon>
        <taxon>Metazoa</taxon>
        <taxon>Ecdysozoa</taxon>
        <taxon>Nematoda</taxon>
        <taxon>Chromadorea</taxon>
        <taxon>Rhabditida</taxon>
        <taxon>Rhabditina</taxon>
        <taxon>Rhabditomorpha</taxon>
        <taxon>Rhabditoidea</taxon>
        <taxon>Rhabditidae</taxon>
        <taxon>Peloderinae</taxon>
        <taxon>Caenorhabditis</taxon>
    </lineage>
</organism>
<reference key="1">
    <citation type="journal article" date="1998" name="Science">
        <title>Genome sequence of the nematode C. elegans: a platform for investigating biology.</title>
        <authorList>
            <consortium name="The C. elegans sequencing consortium"/>
        </authorList>
    </citation>
    <scope>NUCLEOTIDE SEQUENCE [LARGE SCALE GENOMIC DNA]</scope>
    <source>
        <strain>Bristol N2</strain>
    </source>
</reference>
<keyword id="KW-0472">Membrane</keyword>
<keyword id="KW-1185">Reference proteome</keyword>
<keyword id="KW-0812">Transmembrane</keyword>
<keyword id="KW-1133">Transmembrane helix</keyword>
<sequence length="320" mass="35747">MLYQLLHTVLSVVGVSLNAFMMYLALTKSPKIMLPCSAIITIKTFTDILTSAMSFFVMQRIVTDGSSILVIPTGPCTHLGPTACYIGHMFMLCFLECNLIWMISSYIFRYYILYVRDPSIKSLVFVAICLSIPSFIHMATWISNYDPTVAIAIPENVGIESRDMVLGGTIVTWSALTLIIQLFITSILVLIAYAWIRNTLLSFAVKMGSDKNDVKKLNTRLVKVINFQVFLPSFIFLGVFVFVGMFTQLIDPKISQYLVSVIFMFSPICSPFSYILFVPHYLNVILGNKKVSEAKSTTEGCTFRHVNMAASTSNTPECSA</sequence>
<gene>
    <name type="primary">srd-28</name>
    <name type="ORF">M01B2.2</name>
</gene>
<accession>O17956</accession>
<proteinExistence type="inferred from homology"/>
<name>SRD28_CAEEL</name>
<dbReference type="EMBL" id="Z83116">
    <property type="protein sequence ID" value="CAB05560.1"/>
    <property type="molecule type" value="Genomic_DNA"/>
</dbReference>
<dbReference type="PIR" id="T23635">
    <property type="entry name" value="T23635"/>
</dbReference>
<dbReference type="RefSeq" id="NP_506773.1">
    <property type="nucleotide sequence ID" value="NM_074372.2"/>
</dbReference>
<dbReference type="SMR" id="O17956"/>
<dbReference type="BioGRID" id="52053">
    <property type="interactions" value="1"/>
</dbReference>
<dbReference type="FunCoup" id="O17956">
    <property type="interactions" value="4"/>
</dbReference>
<dbReference type="IntAct" id="O17956">
    <property type="interactions" value="1"/>
</dbReference>
<dbReference type="PaxDb" id="6239-M01B2.2"/>
<dbReference type="EnsemblMetazoa" id="M01B2.2.1">
    <property type="protein sequence ID" value="M01B2.2.1"/>
    <property type="gene ID" value="WBGene00005106"/>
</dbReference>
<dbReference type="GeneID" id="187353"/>
<dbReference type="KEGG" id="cel:CELE_M01B2.2"/>
<dbReference type="UCSC" id="M01B2.2">
    <property type="organism name" value="c. elegans"/>
</dbReference>
<dbReference type="AGR" id="WB:WBGene00005106"/>
<dbReference type="CTD" id="187353"/>
<dbReference type="WormBase" id="M01B2.2">
    <property type="protein sequence ID" value="CE16264"/>
    <property type="gene ID" value="WBGene00005106"/>
    <property type="gene designation" value="srd-28"/>
</dbReference>
<dbReference type="eggNOG" id="ENOG502TJS3">
    <property type="taxonomic scope" value="Eukaryota"/>
</dbReference>
<dbReference type="GeneTree" id="ENSGT00970000195825"/>
<dbReference type="HOGENOM" id="CLU_057924_3_1_1"/>
<dbReference type="InParanoid" id="O17956"/>
<dbReference type="OMA" id="WTDEISE"/>
<dbReference type="OrthoDB" id="5888683at2759"/>
<dbReference type="PhylomeDB" id="O17956"/>
<dbReference type="PRO" id="PR:O17956"/>
<dbReference type="Proteomes" id="UP000001940">
    <property type="component" value="Chromosome V"/>
</dbReference>
<dbReference type="Bgee" id="WBGene00005106">
    <property type="expression patterns" value="Expressed in adult organism and 1 other cell type or tissue"/>
</dbReference>
<dbReference type="GO" id="GO:0016020">
    <property type="term" value="C:membrane"/>
    <property type="evidence" value="ECO:0007669"/>
    <property type="project" value="UniProtKB-SubCell"/>
</dbReference>
<dbReference type="GO" id="GO:0007614">
    <property type="term" value="P:short-term memory"/>
    <property type="evidence" value="ECO:0000316"/>
    <property type="project" value="WormBase"/>
</dbReference>
<dbReference type="InterPro" id="IPR019421">
    <property type="entry name" value="7TM_GPCR_serpentine_rcpt_Srd"/>
</dbReference>
<dbReference type="InterPro" id="IPR050920">
    <property type="entry name" value="Nematode_rcpt-like_delta"/>
</dbReference>
<dbReference type="PANTHER" id="PTHR22945:SF9">
    <property type="entry name" value="SERPENTINE RECEPTOR, CLASS D (DELTA)-RELATED"/>
    <property type="match status" value="1"/>
</dbReference>
<dbReference type="PANTHER" id="PTHR22945">
    <property type="entry name" value="SERPENTINE RECEPTOR, CLASS D DELTA"/>
    <property type="match status" value="1"/>
</dbReference>
<dbReference type="Pfam" id="PF10317">
    <property type="entry name" value="7TM_GPCR_Srd"/>
    <property type="match status" value="1"/>
</dbReference>
<dbReference type="SUPFAM" id="SSF81321">
    <property type="entry name" value="Family A G protein-coupled receptor-like"/>
    <property type="match status" value="1"/>
</dbReference>
<comment type="subcellular location">
    <subcellularLocation>
        <location evidence="2">Membrane</location>
        <topology evidence="2">Multi-pass membrane protein</topology>
    </subcellularLocation>
</comment>
<comment type="similarity">
    <text evidence="2">Belongs to the nematode receptor-like protein srd family.</text>
</comment>
<evidence type="ECO:0000255" key="1"/>
<evidence type="ECO:0000305" key="2"/>